<protein>
    <recommendedName>
        <fullName evidence="1">Methylenetetrahydrofolate--tRNA-(uracil-5-)-methyltransferase TrmFO</fullName>
        <ecNumber evidence="1">2.1.1.74</ecNumber>
    </recommendedName>
    <alternativeName>
        <fullName evidence="1">Folate-dependent tRNA (uracil-5-)-methyltransferase</fullName>
    </alternativeName>
    <alternativeName>
        <fullName evidence="1">Folate-dependent tRNA(M-5-U54)-methyltransferase</fullName>
    </alternativeName>
</protein>
<comment type="function">
    <text evidence="1">Catalyzes the folate-dependent formation of 5-methyl-uridine at position 54 (M-5-U54) in all tRNAs.</text>
</comment>
<comment type="catalytic activity">
    <reaction evidence="1">
        <text>uridine(54) in tRNA + (6R)-5,10-methylene-5,6,7,8-tetrahydrofolate + NADH + H(+) = 5-methyluridine(54) in tRNA + (6S)-5,6,7,8-tetrahydrofolate + NAD(+)</text>
        <dbReference type="Rhea" id="RHEA:16873"/>
        <dbReference type="Rhea" id="RHEA-COMP:10167"/>
        <dbReference type="Rhea" id="RHEA-COMP:10193"/>
        <dbReference type="ChEBI" id="CHEBI:15378"/>
        <dbReference type="ChEBI" id="CHEBI:15636"/>
        <dbReference type="ChEBI" id="CHEBI:57453"/>
        <dbReference type="ChEBI" id="CHEBI:57540"/>
        <dbReference type="ChEBI" id="CHEBI:57945"/>
        <dbReference type="ChEBI" id="CHEBI:65315"/>
        <dbReference type="ChEBI" id="CHEBI:74447"/>
        <dbReference type="EC" id="2.1.1.74"/>
    </reaction>
</comment>
<comment type="catalytic activity">
    <reaction evidence="1">
        <text>uridine(54) in tRNA + (6R)-5,10-methylene-5,6,7,8-tetrahydrofolate + NADPH + H(+) = 5-methyluridine(54) in tRNA + (6S)-5,6,7,8-tetrahydrofolate + NADP(+)</text>
        <dbReference type="Rhea" id="RHEA:62372"/>
        <dbReference type="Rhea" id="RHEA-COMP:10167"/>
        <dbReference type="Rhea" id="RHEA-COMP:10193"/>
        <dbReference type="ChEBI" id="CHEBI:15378"/>
        <dbReference type="ChEBI" id="CHEBI:15636"/>
        <dbReference type="ChEBI" id="CHEBI:57453"/>
        <dbReference type="ChEBI" id="CHEBI:57783"/>
        <dbReference type="ChEBI" id="CHEBI:58349"/>
        <dbReference type="ChEBI" id="CHEBI:65315"/>
        <dbReference type="ChEBI" id="CHEBI:74447"/>
        <dbReference type="EC" id="2.1.1.74"/>
    </reaction>
</comment>
<comment type="cofactor">
    <cofactor evidence="1">
        <name>FAD</name>
        <dbReference type="ChEBI" id="CHEBI:57692"/>
    </cofactor>
</comment>
<comment type="subcellular location">
    <subcellularLocation>
        <location evidence="1">Cytoplasm</location>
    </subcellularLocation>
</comment>
<comment type="similarity">
    <text evidence="1">Belongs to the MnmG family. TrmFO subfamily.</text>
</comment>
<accession>C4L614</accession>
<sequence>MLQQRVTVIGAGLAGSEAAWQLAKRGIQVDLYEMRPVRQTPAHHTDQFAELVCSNSLRANGLQNAVGVLKEEMRTLDSLILKAADTASVPAGGALAVDRHEFAGFITEKLKNHENVTVHNEELKEIPEGIVIVATGPLTSPDLSASLKAFTGEDYLYFYDAAAPILDGDTIDRDKVYLKSRYDKGEAAYLNCPMTEEEFDVFYEELIKAEVVPLKEFEKEIYFEGCMPFEVMAERGKKTLLFGPMKPVGLEDPKTGKRPYAVVQLRQDNSAGTLYNLVGFQTHLKWGEQKRIIRLIPGLENADIVRYGVMHRNTFINSPSLLKPTYQARTRDTLFFAGQMTGVEGYVESAASGLLAGINAAKMIAGEELVVLPRETMLGSMAHYITTADGKHFQPMNANFGLVPSLEDAPKKMKKQERYERYANRALETIQQYKDL</sequence>
<feature type="chain" id="PRO_1000213381" description="Methylenetetrahydrofolate--tRNA-(uracil-5-)-methyltransferase TrmFO">
    <location>
        <begin position="1"/>
        <end position="436"/>
    </location>
</feature>
<feature type="binding site" evidence="1">
    <location>
        <begin position="10"/>
        <end position="15"/>
    </location>
    <ligand>
        <name>FAD</name>
        <dbReference type="ChEBI" id="CHEBI:57692"/>
    </ligand>
</feature>
<name>TRMFO_EXISA</name>
<keyword id="KW-0963">Cytoplasm</keyword>
<keyword id="KW-0274">FAD</keyword>
<keyword id="KW-0285">Flavoprotein</keyword>
<keyword id="KW-0489">Methyltransferase</keyword>
<keyword id="KW-0520">NAD</keyword>
<keyword id="KW-0521">NADP</keyword>
<keyword id="KW-0808">Transferase</keyword>
<keyword id="KW-0819">tRNA processing</keyword>
<gene>
    <name evidence="1" type="primary">trmFO</name>
    <name type="ordered locus">EAT1b_2906</name>
</gene>
<evidence type="ECO:0000255" key="1">
    <source>
        <dbReference type="HAMAP-Rule" id="MF_01037"/>
    </source>
</evidence>
<dbReference type="EC" id="2.1.1.74" evidence="1"/>
<dbReference type="EMBL" id="CP001615">
    <property type="protein sequence ID" value="ACQ71820.1"/>
    <property type="molecule type" value="Genomic_DNA"/>
</dbReference>
<dbReference type="RefSeq" id="WP_015881379.1">
    <property type="nucleotide sequence ID" value="NC_012673.1"/>
</dbReference>
<dbReference type="SMR" id="C4L614"/>
<dbReference type="STRING" id="360911.EAT1b_2906"/>
<dbReference type="KEGG" id="eat:EAT1b_2906"/>
<dbReference type="eggNOG" id="COG1206">
    <property type="taxonomic scope" value="Bacteria"/>
</dbReference>
<dbReference type="HOGENOM" id="CLU_033057_1_0_9"/>
<dbReference type="OrthoDB" id="9803114at2"/>
<dbReference type="Proteomes" id="UP000000716">
    <property type="component" value="Chromosome"/>
</dbReference>
<dbReference type="GO" id="GO:0005829">
    <property type="term" value="C:cytosol"/>
    <property type="evidence" value="ECO:0007669"/>
    <property type="project" value="TreeGrafter"/>
</dbReference>
<dbReference type="GO" id="GO:0050660">
    <property type="term" value="F:flavin adenine dinucleotide binding"/>
    <property type="evidence" value="ECO:0007669"/>
    <property type="project" value="UniProtKB-UniRule"/>
</dbReference>
<dbReference type="GO" id="GO:0047151">
    <property type="term" value="F:tRNA (uracil(54)-C5)-methyltransferase activity, 5,10-methylenetetrahydrofolate-dependent"/>
    <property type="evidence" value="ECO:0007669"/>
    <property type="project" value="UniProtKB-UniRule"/>
</dbReference>
<dbReference type="GO" id="GO:0030488">
    <property type="term" value="P:tRNA methylation"/>
    <property type="evidence" value="ECO:0007669"/>
    <property type="project" value="TreeGrafter"/>
</dbReference>
<dbReference type="GO" id="GO:0002098">
    <property type="term" value="P:tRNA wobble uridine modification"/>
    <property type="evidence" value="ECO:0007669"/>
    <property type="project" value="TreeGrafter"/>
</dbReference>
<dbReference type="FunFam" id="3.50.50.60:FF:000035">
    <property type="entry name" value="Methylenetetrahydrofolate--tRNA-(uracil-5-)-methyltransferase TrmFO"/>
    <property type="match status" value="1"/>
</dbReference>
<dbReference type="FunFam" id="3.50.50.60:FF:000040">
    <property type="entry name" value="Methylenetetrahydrofolate--tRNA-(uracil-5-)-methyltransferase TrmFO"/>
    <property type="match status" value="1"/>
</dbReference>
<dbReference type="Gene3D" id="3.50.50.60">
    <property type="entry name" value="FAD/NAD(P)-binding domain"/>
    <property type="match status" value="2"/>
</dbReference>
<dbReference type="HAMAP" id="MF_01037">
    <property type="entry name" value="TrmFO"/>
    <property type="match status" value="1"/>
</dbReference>
<dbReference type="InterPro" id="IPR036188">
    <property type="entry name" value="FAD/NAD-bd_sf"/>
</dbReference>
<dbReference type="InterPro" id="IPR002218">
    <property type="entry name" value="MnmG-rel"/>
</dbReference>
<dbReference type="InterPro" id="IPR020595">
    <property type="entry name" value="MnmG-rel_CS"/>
</dbReference>
<dbReference type="InterPro" id="IPR040131">
    <property type="entry name" value="MnmG_N"/>
</dbReference>
<dbReference type="InterPro" id="IPR004417">
    <property type="entry name" value="TrmFO"/>
</dbReference>
<dbReference type="NCBIfam" id="TIGR00137">
    <property type="entry name" value="gid_trmFO"/>
    <property type="match status" value="1"/>
</dbReference>
<dbReference type="NCBIfam" id="NF003739">
    <property type="entry name" value="PRK05335.1"/>
    <property type="match status" value="1"/>
</dbReference>
<dbReference type="PANTHER" id="PTHR11806">
    <property type="entry name" value="GLUCOSE INHIBITED DIVISION PROTEIN A"/>
    <property type="match status" value="1"/>
</dbReference>
<dbReference type="PANTHER" id="PTHR11806:SF2">
    <property type="entry name" value="METHYLENETETRAHYDROFOLATE--TRNA-(URACIL-5-)-METHYLTRANSFERASE TRMFO"/>
    <property type="match status" value="1"/>
</dbReference>
<dbReference type="Pfam" id="PF01134">
    <property type="entry name" value="GIDA"/>
    <property type="match status" value="1"/>
</dbReference>
<dbReference type="SUPFAM" id="SSF51905">
    <property type="entry name" value="FAD/NAD(P)-binding domain"/>
    <property type="match status" value="1"/>
</dbReference>
<dbReference type="PROSITE" id="PS01281">
    <property type="entry name" value="GIDA_2"/>
    <property type="match status" value="1"/>
</dbReference>
<reference key="1">
    <citation type="journal article" date="2011" name="J. Bacteriol.">
        <title>Complete genome sequence of the Thermophilic Bacterium Exiguobacterium sp. AT1b.</title>
        <authorList>
            <person name="Vishnivetskaya T.A."/>
            <person name="Lucas S."/>
            <person name="Copeland A."/>
            <person name="Lapidus A."/>
            <person name="Glavina del Rio T."/>
            <person name="Dalin E."/>
            <person name="Tice H."/>
            <person name="Bruce D.C."/>
            <person name="Goodwin L.A."/>
            <person name="Pitluck S."/>
            <person name="Saunders E."/>
            <person name="Brettin T."/>
            <person name="Detter C."/>
            <person name="Han C."/>
            <person name="Larimer F."/>
            <person name="Land M.L."/>
            <person name="Hauser L.J."/>
            <person name="Kyrpides N.C."/>
            <person name="Ovchinnikova G."/>
            <person name="Kathariou S."/>
            <person name="Ramaley R.F."/>
            <person name="Rodrigues D.F."/>
            <person name="Hendrix C."/>
            <person name="Richardson P."/>
            <person name="Tiedje J.M."/>
        </authorList>
    </citation>
    <scope>NUCLEOTIDE SEQUENCE [LARGE SCALE GENOMIC DNA]</scope>
    <source>
        <strain>ATCC BAA-1283 / AT1b</strain>
    </source>
</reference>
<proteinExistence type="inferred from homology"/>
<organism>
    <name type="scientific">Exiguobacterium sp. (strain ATCC BAA-1283 / AT1b)</name>
    <dbReference type="NCBI Taxonomy" id="360911"/>
    <lineage>
        <taxon>Bacteria</taxon>
        <taxon>Bacillati</taxon>
        <taxon>Bacillota</taxon>
        <taxon>Bacilli</taxon>
        <taxon>Bacillales</taxon>
        <taxon>Bacillales Family XII. Incertae Sedis</taxon>
        <taxon>Exiguobacterium</taxon>
    </lineage>
</organism>